<organism>
    <name type="scientific">Aeromonas hydrophila subsp. hydrophila (strain ATCC 7966 / DSM 30187 / BCRC 13018 / CCUG 14551 / JCM 1027 / KCTC 2358 / NCIMB 9240 / NCTC 8049)</name>
    <dbReference type="NCBI Taxonomy" id="380703"/>
    <lineage>
        <taxon>Bacteria</taxon>
        <taxon>Pseudomonadati</taxon>
        <taxon>Pseudomonadota</taxon>
        <taxon>Gammaproteobacteria</taxon>
        <taxon>Aeromonadales</taxon>
        <taxon>Aeromonadaceae</taxon>
        <taxon>Aeromonas</taxon>
    </lineage>
</organism>
<keyword id="KW-0963">Cytoplasm</keyword>
<keyword id="KW-0324">Glycolysis</keyword>
<keyword id="KW-0456">Lyase</keyword>
<keyword id="KW-0460">Magnesium</keyword>
<keyword id="KW-0479">Metal-binding</keyword>
<keyword id="KW-1185">Reference proteome</keyword>
<keyword id="KW-0964">Secreted</keyword>
<gene>
    <name evidence="1" type="primary">eno</name>
    <name type="ordered locus">AHA_0821</name>
</gene>
<accession>A0KGH3</accession>
<reference key="1">
    <citation type="journal article" date="2006" name="J. Bacteriol.">
        <title>Genome sequence of Aeromonas hydrophila ATCC 7966T: jack of all trades.</title>
        <authorList>
            <person name="Seshadri R."/>
            <person name="Joseph S.W."/>
            <person name="Chopra A.K."/>
            <person name="Sha J."/>
            <person name="Shaw J."/>
            <person name="Graf J."/>
            <person name="Haft D.H."/>
            <person name="Wu M."/>
            <person name="Ren Q."/>
            <person name="Rosovitz M.J."/>
            <person name="Madupu R."/>
            <person name="Tallon L."/>
            <person name="Kim M."/>
            <person name="Jin S."/>
            <person name="Vuong H."/>
            <person name="Stine O.C."/>
            <person name="Ali A."/>
            <person name="Horneman A.J."/>
            <person name="Heidelberg J.F."/>
        </authorList>
    </citation>
    <scope>NUCLEOTIDE SEQUENCE [LARGE SCALE GENOMIC DNA]</scope>
    <source>
        <strain>ATCC 7966 / DSM 30187 / BCRC 13018 / CCUG 14551 / JCM 1027 / KCTC 2358 / NCIMB 9240 / NCTC 8049</strain>
    </source>
</reference>
<feature type="chain" id="PRO_0000280832" description="Enolase">
    <location>
        <begin position="1"/>
        <end position="433"/>
    </location>
</feature>
<feature type="active site" description="Proton donor" evidence="1">
    <location>
        <position position="209"/>
    </location>
</feature>
<feature type="active site" description="Proton acceptor" evidence="1">
    <location>
        <position position="343"/>
    </location>
</feature>
<feature type="binding site" evidence="1">
    <location>
        <position position="167"/>
    </location>
    <ligand>
        <name>(2R)-2-phosphoglycerate</name>
        <dbReference type="ChEBI" id="CHEBI:58289"/>
    </ligand>
</feature>
<feature type="binding site" evidence="1">
    <location>
        <position position="246"/>
    </location>
    <ligand>
        <name>Mg(2+)</name>
        <dbReference type="ChEBI" id="CHEBI:18420"/>
    </ligand>
</feature>
<feature type="binding site" evidence="1">
    <location>
        <position position="291"/>
    </location>
    <ligand>
        <name>Mg(2+)</name>
        <dbReference type="ChEBI" id="CHEBI:18420"/>
    </ligand>
</feature>
<feature type="binding site" evidence="1">
    <location>
        <position position="318"/>
    </location>
    <ligand>
        <name>Mg(2+)</name>
        <dbReference type="ChEBI" id="CHEBI:18420"/>
    </ligand>
</feature>
<feature type="binding site" evidence="1">
    <location>
        <position position="343"/>
    </location>
    <ligand>
        <name>(2R)-2-phosphoglycerate</name>
        <dbReference type="ChEBI" id="CHEBI:58289"/>
    </ligand>
</feature>
<feature type="binding site" evidence="1">
    <location>
        <position position="372"/>
    </location>
    <ligand>
        <name>(2R)-2-phosphoglycerate</name>
        <dbReference type="ChEBI" id="CHEBI:58289"/>
    </ligand>
</feature>
<feature type="binding site" evidence="1">
    <location>
        <position position="373"/>
    </location>
    <ligand>
        <name>(2R)-2-phosphoglycerate</name>
        <dbReference type="ChEBI" id="CHEBI:58289"/>
    </ligand>
</feature>
<feature type="binding site" evidence="1">
    <location>
        <position position="394"/>
    </location>
    <ligand>
        <name>(2R)-2-phosphoglycerate</name>
        <dbReference type="ChEBI" id="CHEBI:58289"/>
    </ligand>
</feature>
<sequence>MSKIVKVIGREIIDSRGNPTVEAEVHLEGGFVGMAAAPSGASTGSREALELRDGDKSRFLGKGVLKALEAVNGPIAQALLGKDAKDQATVDQIMIDLDGTENKSKFGANAILAVSLANAKAAAAAKGMPLYAHIAELNGTPGVYSMPLPMMNIINGGEHADNNVDIQEFMIQPVGAKTLKEAVRMGAEVFHNLAKVLKSKGYNTAVGDEGGFAPNLKSNAEALEVIAEAVAAAGYKLGTDITLAMDCAASEFYDAEKKEYNLKGEGRVFTSNGFSDFLADLTTKFPIVSIEDGLDESDWDGFAYQTAELGKKIQIVGDDLFVTNTKILKRGIDNGIANSILIKFNQIGSLTETLAAIKMAKDAGYTAVISHRSGETEDATIADLAVGTAAGQIKTGSMSRSDRVAKYNQLIRIEEALGAKAPFRGLKEVKNQA</sequence>
<dbReference type="EC" id="4.2.1.11" evidence="1"/>
<dbReference type="EMBL" id="CP000462">
    <property type="protein sequence ID" value="ABK35864.1"/>
    <property type="molecule type" value="Genomic_DNA"/>
</dbReference>
<dbReference type="RefSeq" id="WP_011704769.1">
    <property type="nucleotide sequence ID" value="NC_008570.1"/>
</dbReference>
<dbReference type="RefSeq" id="YP_855364.1">
    <property type="nucleotide sequence ID" value="NC_008570.1"/>
</dbReference>
<dbReference type="SMR" id="A0KGH3"/>
<dbReference type="STRING" id="380703.AHA_0821"/>
<dbReference type="EnsemblBacteria" id="ABK35864">
    <property type="protein sequence ID" value="ABK35864"/>
    <property type="gene ID" value="AHA_0821"/>
</dbReference>
<dbReference type="GeneID" id="4489301"/>
<dbReference type="KEGG" id="aha:AHA_0821"/>
<dbReference type="PATRIC" id="fig|380703.7.peg.821"/>
<dbReference type="eggNOG" id="COG0148">
    <property type="taxonomic scope" value="Bacteria"/>
</dbReference>
<dbReference type="HOGENOM" id="CLU_031223_2_1_6"/>
<dbReference type="OrthoDB" id="9804716at2"/>
<dbReference type="UniPathway" id="UPA00109">
    <property type="reaction ID" value="UER00187"/>
</dbReference>
<dbReference type="Proteomes" id="UP000000756">
    <property type="component" value="Chromosome"/>
</dbReference>
<dbReference type="GO" id="GO:0009986">
    <property type="term" value="C:cell surface"/>
    <property type="evidence" value="ECO:0007669"/>
    <property type="project" value="UniProtKB-SubCell"/>
</dbReference>
<dbReference type="GO" id="GO:0005576">
    <property type="term" value="C:extracellular region"/>
    <property type="evidence" value="ECO:0007669"/>
    <property type="project" value="UniProtKB-SubCell"/>
</dbReference>
<dbReference type="GO" id="GO:0000015">
    <property type="term" value="C:phosphopyruvate hydratase complex"/>
    <property type="evidence" value="ECO:0007669"/>
    <property type="project" value="InterPro"/>
</dbReference>
<dbReference type="GO" id="GO:0000287">
    <property type="term" value="F:magnesium ion binding"/>
    <property type="evidence" value="ECO:0007669"/>
    <property type="project" value="UniProtKB-UniRule"/>
</dbReference>
<dbReference type="GO" id="GO:0004634">
    <property type="term" value="F:phosphopyruvate hydratase activity"/>
    <property type="evidence" value="ECO:0007669"/>
    <property type="project" value="UniProtKB-UniRule"/>
</dbReference>
<dbReference type="GO" id="GO:0006096">
    <property type="term" value="P:glycolytic process"/>
    <property type="evidence" value="ECO:0007669"/>
    <property type="project" value="UniProtKB-UniRule"/>
</dbReference>
<dbReference type="CDD" id="cd03313">
    <property type="entry name" value="enolase"/>
    <property type="match status" value="1"/>
</dbReference>
<dbReference type="FunFam" id="3.20.20.120:FF:000001">
    <property type="entry name" value="Enolase"/>
    <property type="match status" value="1"/>
</dbReference>
<dbReference type="FunFam" id="3.30.390.10:FF:000001">
    <property type="entry name" value="Enolase"/>
    <property type="match status" value="1"/>
</dbReference>
<dbReference type="Gene3D" id="3.20.20.120">
    <property type="entry name" value="Enolase-like C-terminal domain"/>
    <property type="match status" value="1"/>
</dbReference>
<dbReference type="Gene3D" id="3.30.390.10">
    <property type="entry name" value="Enolase-like, N-terminal domain"/>
    <property type="match status" value="1"/>
</dbReference>
<dbReference type="HAMAP" id="MF_00318">
    <property type="entry name" value="Enolase"/>
    <property type="match status" value="1"/>
</dbReference>
<dbReference type="InterPro" id="IPR000941">
    <property type="entry name" value="Enolase"/>
</dbReference>
<dbReference type="InterPro" id="IPR036849">
    <property type="entry name" value="Enolase-like_C_sf"/>
</dbReference>
<dbReference type="InterPro" id="IPR029017">
    <property type="entry name" value="Enolase-like_N"/>
</dbReference>
<dbReference type="InterPro" id="IPR020810">
    <property type="entry name" value="Enolase_C"/>
</dbReference>
<dbReference type="InterPro" id="IPR020809">
    <property type="entry name" value="Enolase_CS"/>
</dbReference>
<dbReference type="InterPro" id="IPR020811">
    <property type="entry name" value="Enolase_N"/>
</dbReference>
<dbReference type="NCBIfam" id="TIGR01060">
    <property type="entry name" value="eno"/>
    <property type="match status" value="1"/>
</dbReference>
<dbReference type="PANTHER" id="PTHR11902">
    <property type="entry name" value="ENOLASE"/>
    <property type="match status" value="1"/>
</dbReference>
<dbReference type="PANTHER" id="PTHR11902:SF1">
    <property type="entry name" value="ENOLASE"/>
    <property type="match status" value="1"/>
</dbReference>
<dbReference type="Pfam" id="PF00113">
    <property type="entry name" value="Enolase_C"/>
    <property type="match status" value="1"/>
</dbReference>
<dbReference type="Pfam" id="PF03952">
    <property type="entry name" value="Enolase_N"/>
    <property type="match status" value="1"/>
</dbReference>
<dbReference type="PIRSF" id="PIRSF001400">
    <property type="entry name" value="Enolase"/>
    <property type="match status" value="1"/>
</dbReference>
<dbReference type="PRINTS" id="PR00148">
    <property type="entry name" value="ENOLASE"/>
</dbReference>
<dbReference type="SFLD" id="SFLDS00001">
    <property type="entry name" value="Enolase"/>
    <property type="match status" value="1"/>
</dbReference>
<dbReference type="SFLD" id="SFLDF00002">
    <property type="entry name" value="enolase"/>
    <property type="match status" value="1"/>
</dbReference>
<dbReference type="SMART" id="SM01192">
    <property type="entry name" value="Enolase_C"/>
    <property type="match status" value="1"/>
</dbReference>
<dbReference type="SMART" id="SM01193">
    <property type="entry name" value="Enolase_N"/>
    <property type="match status" value="1"/>
</dbReference>
<dbReference type="SUPFAM" id="SSF51604">
    <property type="entry name" value="Enolase C-terminal domain-like"/>
    <property type="match status" value="1"/>
</dbReference>
<dbReference type="SUPFAM" id="SSF54826">
    <property type="entry name" value="Enolase N-terminal domain-like"/>
    <property type="match status" value="1"/>
</dbReference>
<dbReference type="PROSITE" id="PS00164">
    <property type="entry name" value="ENOLASE"/>
    <property type="match status" value="1"/>
</dbReference>
<name>ENO_AERHH</name>
<evidence type="ECO:0000255" key="1">
    <source>
        <dbReference type="HAMAP-Rule" id="MF_00318"/>
    </source>
</evidence>
<protein>
    <recommendedName>
        <fullName evidence="1">Enolase</fullName>
        <ecNumber evidence="1">4.2.1.11</ecNumber>
    </recommendedName>
    <alternativeName>
        <fullName evidence="1">2-phospho-D-glycerate hydro-lyase</fullName>
    </alternativeName>
    <alternativeName>
        <fullName evidence="1">2-phosphoglycerate dehydratase</fullName>
    </alternativeName>
</protein>
<proteinExistence type="inferred from homology"/>
<comment type="function">
    <text evidence="1">Catalyzes the reversible conversion of 2-phosphoglycerate (2-PG) into phosphoenolpyruvate (PEP). It is essential for the degradation of carbohydrates via glycolysis.</text>
</comment>
<comment type="catalytic activity">
    <reaction evidence="1">
        <text>(2R)-2-phosphoglycerate = phosphoenolpyruvate + H2O</text>
        <dbReference type="Rhea" id="RHEA:10164"/>
        <dbReference type="ChEBI" id="CHEBI:15377"/>
        <dbReference type="ChEBI" id="CHEBI:58289"/>
        <dbReference type="ChEBI" id="CHEBI:58702"/>
        <dbReference type="EC" id="4.2.1.11"/>
    </reaction>
</comment>
<comment type="cofactor">
    <cofactor evidence="1">
        <name>Mg(2+)</name>
        <dbReference type="ChEBI" id="CHEBI:18420"/>
    </cofactor>
    <text evidence="1">Binds a second Mg(2+) ion via substrate during catalysis.</text>
</comment>
<comment type="pathway">
    <text evidence="1">Carbohydrate degradation; glycolysis; pyruvate from D-glyceraldehyde 3-phosphate: step 4/5.</text>
</comment>
<comment type="subunit">
    <text evidence="1">Component of the RNA degradosome, a multiprotein complex involved in RNA processing and mRNA degradation.</text>
</comment>
<comment type="subcellular location">
    <subcellularLocation>
        <location evidence="1">Cytoplasm</location>
    </subcellularLocation>
    <subcellularLocation>
        <location evidence="1">Secreted</location>
    </subcellularLocation>
    <subcellularLocation>
        <location evidence="1">Cell surface</location>
    </subcellularLocation>
    <text evidence="1">Fractions of enolase are present in both the cytoplasm and on the cell surface.</text>
</comment>
<comment type="similarity">
    <text evidence="1">Belongs to the enolase family.</text>
</comment>